<organism>
    <name type="scientific">Acidovorax ebreus (strain TPSY)</name>
    <name type="common">Diaphorobacter sp. (strain TPSY)</name>
    <dbReference type="NCBI Taxonomy" id="535289"/>
    <lineage>
        <taxon>Bacteria</taxon>
        <taxon>Pseudomonadati</taxon>
        <taxon>Pseudomonadota</taxon>
        <taxon>Betaproteobacteria</taxon>
        <taxon>Burkholderiales</taxon>
        <taxon>Comamonadaceae</taxon>
        <taxon>Diaphorobacter</taxon>
    </lineage>
</organism>
<proteinExistence type="inferred from homology"/>
<feature type="chain" id="PRO_1000134737" description="Tetraacyldisaccharide 4'-kinase">
    <location>
        <begin position="1"/>
        <end position="338"/>
    </location>
</feature>
<feature type="binding site" evidence="1">
    <location>
        <begin position="67"/>
        <end position="74"/>
    </location>
    <ligand>
        <name>ATP</name>
        <dbReference type="ChEBI" id="CHEBI:30616"/>
    </ligand>
</feature>
<sequence>MAAPGRPSPLAERLRGAWQHRGALALALWPLSLLYGVLTALRRALYRTGLLRSERLPVPVIVVGNVIAGGAGKTPVTLAVVRHLQARGWRPGVISRGYGRATVDCREVLPASSAAEVGDEPLLIARASGAPVFVARRRAQAGRALLAAHPATNILVCDDGLQHLALARDLEVCVFNDEGAGNGWMLPAGPLREPWPRAVDLVLHAGSSPGGGAPQFALSRELATHAVNASGHQLPLEQLQGEPSHALAAIARPHDFFAMLHARGIQPESEEALPDHYDFSSWKRPPDKRLRLICTEKDAVKLWPAHPDALAVPLALRIPPAFFDALDARLASLSSSGH</sequence>
<gene>
    <name evidence="1" type="primary">lpxK</name>
    <name type="ordered locus">Dtpsy_1554</name>
</gene>
<comment type="function">
    <text evidence="1">Transfers the gamma-phosphate of ATP to the 4'-position of a tetraacyldisaccharide 1-phosphate intermediate (termed DS-1-P) to form tetraacyldisaccharide 1,4'-bis-phosphate (lipid IVA).</text>
</comment>
<comment type="catalytic activity">
    <reaction evidence="1">
        <text>a lipid A disaccharide + ATP = a lipid IVA + ADP + H(+)</text>
        <dbReference type="Rhea" id="RHEA:67840"/>
        <dbReference type="ChEBI" id="CHEBI:15378"/>
        <dbReference type="ChEBI" id="CHEBI:30616"/>
        <dbReference type="ChEBI" id="CHEBI:176343"/>
        <dbReference type="ChEBI" id="CHEBI:176425"/>
        <dbReference type="ChEBI" id="CHEBI:456216"/>
        <dbReference type="EC" id="2.7.1.130"/>
    </reaction>
</comment>
<comment type="pathway">
    <text evidence="1">Glycolipid biosynthesis; lipid IV(A) biosynthesis; lipid IV(A) from (3R)-3-hydroxytetradecanoyl-[acyl-carrier-protein] and UDP-N-acetyl-alpha-D-glucosamine: step 6/6.</text>
</comment>
<comment type="similarity">
    <text evidence="1">Belongs to the LpxK family.</text>
</comment>
<protein>
    <recommendedName>
        <fullName evidence="1">Tetraacyldisaccharide 4'-kinase</fullName>
        <ecNumber evidence="1">2.7.1.130</ecNumber>
    </recommendedName>
    <alternativeName>
        <fullName evidence="1">Lipid A 4'-kinase</fullName>
    </alternativeName>
</protein>
<evidence type="ECO:0000255" key="1">
    <source>
        <dbReference type="HAMAP-Rule" id="MF_00409"/>
    </source>
</evidence>
<accession>B9MI83</accession>
<name>LPXK_ACIET</name>
<reference key="1">
    <citation type="submission" date="2009-01" db="EMBL/GenBank/DDBJ databases">
        <title>Complete sequence of Diaphorobacter sp. TPSY.</title>
        <authorList>
            <consortium name="US DOE Joint Genome Institute"/>
            <person name="Lucas S."/>
            <person name="Copeland A."/>
            <person name="Lapidus A."/>
            <person name="Glavina del Rio T."/>
            <person name="Tice H."/>
            <person name="Bruce D."/>
            <person name="Goodwin L."/>
            <person name="Pitluck S."/>
            <person name="Chertkov O."/>
            <person name="Brettin T."/>
            <person name="Detter J.C."/>
            <person name="Han C."/>
            <person name="Larimer F."/>
            <person name="Land M."/>
            <person name="Hauser L."/>
            <person name="Kyrpides N."/>
            <person name="Mikhailova N."/>
            <person name="Coates J.D."/>
        </authorList>
    </citation>
    <scope>NUCLEOTIDE SEQUENCE [LARGE SCALE GENOMIC DNA]</scope>
    <source>
        <strain>TPSY</strain>
    </source>
</reference>
<keyword id="KW-0067">ATP-binding</keyword>
<keyword id="KW-0418">Kinase</keyword>
<keyword id="KW-0441">Lipid A biosynthesis</keyword>
<keyword id="KW-0444">Lipid biosynthesis</keyword>
<keyword id="KW-0443">Lipid metabolism</keyword>
<keyword id="KW-0547">Nucleotide-binding</keyword>
<keyword id="KW-1185">Reference proteome</keyword>
<keyword id="KW-0808">Transferase</keyword>
<dbReference type="EC" id="2.7.1.130" evidence="1"/>
<dbReference type="EMBL" id="CP001392">
    <property type="protein sequence ID" value="ACM33015.1"/>
    <property type="molecule type" value="Genomic_DNA"/>
</dbReference>
<dbReference type="RefSeq" id="WP_015913123.1">
    <property type="nucleotide sequence ID" value="NC_011992.1"/>
</dbReference>
<dbReference type="SMR" id="B9MI83"/>
<dbReference type="KEGG" id="dia:Dtpsy_1554"/>
<dbReference type="eggNOG" id="COG1663">
    <property type="taxonomic scope" value="Bacteria"/>
</dbReference>
<dbReference type="HOGENOM" id="CLU_038816_2_0_4"/>
<dbReference type="UniPathway" id="UPA00359">
    <property type="reaction ID" value="UER00482"/>
</dbReference>
<dbReference type="Proteomes" id="UP000000450">
    <property type="component" value="Chromosome"/>
</dbReference>
<dbReference type="GO" id="GO:0005886">
    <property type="term" value="C:plasma membrane"/>
    <property type="evidence" value="ECO:0007669"/>
    <property type="project" value="TreeGrafter"/>
</dbReference>
<dbReference type="GO" id="GO:0005524">
    <property type="term" value="F:ATP binding"/>
    <property type="evidence" value="ECO:0007669"/>
    <property type="project" value="UniProtKB-UniRule"/>
</dbReference>
<dbReference type="GO" id="GO:0009029">
    <property type="term" value="F:tetraacyldisaccharide 4'-kinase activity"/>
    <property type="evidence" value="ECO:0007669"/>
    <property type="project" value="UniProtKB-UniRule"/>
</dbReference>
<dbReference type="GO" id="GO:0009245">
    <property type="term" value="P:lipid A biosynthetic process"/>
    <property type="evidence" value="ECO:0007669"/>
    <property type="project" value="UniProtKB-UniRule"/>
</dbReference>
<dbReference type="GO" id="GO:0009244">
    <property type="term" value="P:lipopolysaccharide core region biosynthetic process"/>
    <property type="evidence" value="ECO:0007669"/>
    <property type="project" value="TreeGrafter"/>
</dbReference>
<dbReference type="HAMAP" id="MF_00409">
    <property type="entry name" value="LpxK"/>
    <property type="match status" value="1"/>
</dbReference>
<dbReference type="InterPro" id="IPR003758">
    <property type="entry name" value="LpxK"/>
</dbReference>
<dbReference type="InterPro" id="IPR027417">
    <property type="entry name" value="P-loop_NTPase"/>
</dbReference>
<dbReference type="NCBIfam" id="TIGR00682">
    <property type="entry name" value="lpxK"/>
    <property type="match status" value="1"/>
</dbReference>
<dbReference type="PANTHER" id="PTHR42724">
    <property type="entry name" value="TETRAACYLDISACCHARIDE 4'-KINASE"/>
    <property type="match status" value="1"/>
</dbReference>
<dbReference type="PANTHER" id="PTHR42724:SF1">
    <property type="entry name" value="TETRAACYLDISACCHARIDE 4'-KINASE, MITOCHONDRIAL-RELATED"/>
    <property type="match status" value="1"/>
</dbReference>
<dbReference type="Pfam" id="PF02606">
    <property type="entry name" value="LpxK"/>
    <property type="match status" value="1"/>
</dbReference>
<dbReference type="SUPFAM" id="SSF52540">
    <property type="entry name" value="P-loop containing nucleoside triphosphate hydrolases"/>
    <property type="match status" value="1"/>
</dbReference>